<organism>
    <name type="scientific">Clostridium botulinum (strain Eklund 17B / Type B)</name>
    <dbReference type="NCBI Taxonomy" id="935198"/>
    <lineage>
        <taxon>Bacteria</taxon>
        <taxon>Bacillati</taxon>
        <taxon>Bacillota</taxon>
        <taxon>Clostridia</taxon>
        <taxon>Eubacteriales</taxon>
        <taxon>Clostridiaceae</taxon>
        <taxon>Clostridium</taxon>
    </lineage>
</organism>
<keyword id="KW-0687">Ribonucleoprotein</keyword>
<keyword id="KW-0689">Ribosomal protein</keyword>
<gene>
    <name evidence="1" type="primary">rplS</name>
    <name type="ordered locus">CLL_A1250</name>
</gene>
<feature type="chain" id="PRO_1000193811" description="Large ribosomal subunit protein bL19">
    <location>
        <begin position="1"/>
        <end position="116"/>
    </location>
</feature>
<proteinExistence type="inferred from homology"/>
<accession>B2TJ32</accession>
<evidence type="ECO:0000255" key="1">
    <source>
        <dbReference type="HAMAP-Rule" id="MF_00402"/>
    </source>
</evidence>
<evidence type="ECO:0000305" key="2"/>
<dbReference type="EMBL" id="CP001056">
    <property type="protein sequence ID" value="ACD24505.1"/>
    <property type="molecule type" value="Genomic_DNA"/>
</dbReference>
<dbReference type="SMR" id="B2TJ32"/>
<dbReference type="KEGG" id="cbk:CLL_A1250"/>
<dbReference type="PATRIC" id="fig|935198.13.peg.1196"/>
<dbReference type="HOGENOM" id="CLU_103507_2_1_9"/>
<dbReference type="Proteomes" id="UP000001195">
    <property type="component" value="Chromosome"/>
</dbReference>
<dbReference type="GO" id="GO:0022625">
    <property type="term" value="C:cytosolic large ribosomal subunit"/>
    <property type="evidence" value="ECO:0007669"/>
    <property type="project" value="TreeGrafter"/>
</dbReference>
<dbReference type="GO" id="GO:0003735">
    <property type="term" value="F:structural constituent of ribosome"/>
    <property type="evidence" value="ECO:0007669"/>
    <property type="project" value="InterPro"/>
</dbReference>
<dbReference type="GO" id="GO:0006412">
    <property type="term" value="P:translation"/>
    <property type="evidence" value="ECO:0007669"/>
    <property type="project" value="UniProtKB-UniRule"/>
</dbReference>
<dbReference type="FunFam" id="2.30.30.790:FF:000001">
    <property type="entry name" value="50S ribosomal protein L19"/>
    <property type="match status" value="1"/>
</dbReference>
<dbReference type="Gene3D" id="2.30.30.790">
    <property type="match status" value="1"/>
</dbReference>
<dbReference type="HAMAP" id="MF_00402">
    <property type="entry name" value="Ribosomal_bL19"/>
    <property type="match status" value="1"/>
</dbReference>
<dbReference type="InterPro" id="IPR001857">
    <property type="entry name" value="Ribosomal_bL19"/>
</dbReference>
<dbReference type="InterPro" id="IPR018257">
    <property type="entry name" value="Ribosomal_bL19_CS"/>
</dbReference>
<dbReference type="InterPro" id="IPR038657">
    <property type="entry name" value="Ribosomal_bL19_sf"/>
</dbReference>
<dbReference type="InterPro" id="IPR008991">
    <property type="entry name" value="Translation_prot_SH3-like_sf"/>
</dbReference>
<dbReference type="NCBIfam" id="TIGR01024">
    <property type="entry name" value="rplS_bact"/>
    <property type="match status" value="1"/>
</dbReference>
<dbReference type="PANTHER" id="PTHR15680:SF9">
    <property type="entry name" value="LARGE RIBOSOMAL SUBUNIT PROTEIN BL19M"/>
    <property type="match status" value="1"/>
</dbReference>
<dbReference type="PANTHER" id="PTHR15680">
    <property type="entry name" value="RIBOSOMAL PROTEIN L19"/>
    <property type="match status" value="1"/>
</dbReference>
<dbReference type="Pfam" id="PF01245">
    <property type="entry name" value="Ribosomal_L19"/>
    <property type="match status" value="1"/>
</dbReference>
<dbReference type="PIRSF" id="PIRSF002191">
    <property type="entry name" value="Ribosomal_L19"/>
    <property type="match status" value="1"/>
</dbReference>
<dbReference type="PRINTS" id="PR00061">
    <property type="entry name" value="RIBOSOMALL19"/>
</dbReference>
<dbReference type="SUPFAM" id="SSF50104">
    <property type="entry name" value="Translation proteins SH3-like domain"/>
    <property type="match status" value="1"/>
</dbReference>
<dbReference type="PROSITE" id="PS01015">
    <property type="entry name" value="RIBOSOMAL_L19"/>
    <property type="match status" value="1"/>
</dbReference>
<comment type="function">
    <text evidence="1">This protein is located at the 30S-50S ribosomal subunit interface and may play a role in the structure and function of the aminoacyl-tRNA binding site.</text>
</comment>
<comment type="similarity">
    <text evidence="1">Belongs to the bacterial ribosomal protein bL19 family.</text>
</comment>
<reference key="1">
    <citation type="submission" date="2008-04" db="EMBL/GenBank/DDBJ databases">
        <title>Complete sequence of Clostridium botulinum strain Eklund.</title>
        <authorList>
            <person name="Brinkac L.M."/>
            <person name="Brown J.L."/>
            <person name="Bruce D."/>
            <person name="Detter C."/>
            <person name="Munk C."/>
            <person name="Smith L.A."/>
            <person name="Smith T.J."/>
            <person name="Sutton G."/>
            <person name="Brettin T.S."/>
        </authorList>
    </citation>
    <scope>NUCLEOTIDE SEQUENCE [LARGE SCALE GENOMIC DNA]</scope>
    <source>
        <strain>Eklund 17B / Type B</strain>
    </source>
</reference>
<sequence>MNEIIRAIEAEQLRTDLPDFKIGDNVKVYVKVTEGTRERVQMFEGTVIKKQNGGLRETFTVRRVAYGCGVERTFPMHAPIIEKIEISRRGKVRRAKLYYLRDRVGKAAKVKELLTR</sequence>
<name>RL19_CLOBB</name>
<protein>
    <recommendedName>
        <fullName evidence="1">Large ribosomal subunit protein bL19</fullName>
    </recommendedName>
    <alternativeName>
        <fullName evidence="2">50S ribosomal protein L19</fullName>
    </alternativeName>
</protein>